<gene>
    <name evidence="1" type="primary">atpC</name>
    <name type="ordered locus">BAbS19_I16870</name>
</gene>
<organism>
    <name type="scientific">Brucella abortus (strain S19)</name>
    <dbReference type="NCBI Taxonomy" id="430066"/>
    <lineage>
        <taxon>Bacteria</taxon>
        <taxon>Pseudomonadati</taxon>
        <taxon>Pseudomonadota</taxon>
        <taxon>Alphaproteobacteria</taxon>
        <taxon>Hyphomicrobiales</taxon>
        <taxon>Brucellaceae</taxon>
        <taxon>Brucella/Ochrobactrum group</taxon>
        <taxon>Brucella</taxon>
    </lineage>
</organism>
<evidence type="ECO:0000255" key="1">
    <source>
        <dbReference type="HAMAP-Rule" id="MF_00530"/>
    </source>
</evidence>
<name>ATPE_BRUA1</name>
<comment type="function">
    <text evidence="1">Produces ATP from ADP in the presence of a proton gradient across the membrane.</text>
</comment>
<comment type="subunit">
    <text evidence="1">F-type ATPases have 2 components, CF(1) - the catalytic core - and CF(0) - the membrane proton channel. CF(1) has five subunits: alpha(3), beta(3), gamma(1), delta(1), epsilon(1). CF(0) has three main subunits: a, b and c.</text>
</comment>
<comment type="subcellular location">
    <subcellularLocation>
        <location evidence="1">Cell inner membrane</location>
        <topology evidence="1">Peripheral membrane protein</topology>
    </subcellularLocation>
</comment>
<comment type="similarity">
    <text evidence="1">Belongs to the ATPase epsilon chain family.</text>
</comment>
<dbReference type="EMBL" id="CP000887">
    <property type="protein sequence ID" value="ACD73169.1"/>
    <property type="molecule type" value="Genomic_DNA"/>
</dbReference>
<dbReference type="RefSeq" id="WP_002964875.1">
    <property type="nucleotide sequence ID" value="NC_010742.1"/>
</dbReference>
<dbReference type="SMR" id="B2S7M2"/>
<dbReference type="KEGG" id="bmc:BAbS19_I16870"/>
<dbReference type="HOGENOM" id="CLU_084338_2_1_5"/>
<dbReference type="Proteomes" id="UP000002565">
    <property type="component" value="Chromosome 1"/>
</dbReference>
<dbReference type="GO" id="GO:0005886">
    <property type="term" value="C:plasma membrane"/>
    <property type="evidence" value="ECO:0007669"/>
    <property type="project" value="UniProtKB-SubCell"/>
</dbReference>
<dbReference type="GO" id="GO:0045259">
    <property type="term" value="C:proton-transporting ATP synthase complex"/>
    <property type="evidence" value="ECO:0007669"/>
    <property type="project" value="UniProtKB-KW"/>
</dbReference>
<dbReference type="GO" id="GO:0005524">
    <property type="term" value="F:ATP binding"/>
    <property type="evidence" value="ECO:0007669"/>
    <property type="project" value="UniProtKB-UniRule"/>
</dbReference>
<dbReference type="GO" id="GO:0046933">
    <property type="term" value="F:proton-transporting ATP synthase activity, rotational mechanism"/>
    <property type="evidence" value="ECO:0007669"/>
    <property type="project" value="UniProtKB-UniRule"/>
</dbReference>
<dbReference type="CDD" id="cd12152">
    <property type="entry name" value="F1-ATPase_delta"/>
    <property type="match status" value="1"/>
</dbReference>
<dbReference type="Gene3D" id="2.60.15.10">
    <property type="entry name" value="F0F1 ATP synthase delta/epsilon subunit, N-terminal"/>
    <property type="match status" value="1"/>
</dbReference>
<dbReference type="HAMAP" id="MF_00530">
    <property type="entry name" value="ATP_synth_epsil_bac"/>
    <property type="match status" value="1"/>
</dbReference>
<dbReference type="InterPro" id="IPR001469">
    <property type="entry name" value="ATP_synth_F1_dsu/esu"/>
</dbReference>
<dbReference type="InterPro" id="IPR020546">
    <property type="entry name" value="ATP_synth_F1_dsu/esu_N"/>
</dbReference>
<dbReference type="InterPro" id="IPR036771">
    <property type="entry name" value="ATPsynth_dsu/esu_N"/>
</dbReference>
<dbReference type="NCBIfam" id="TIGR01216">
    <property type="entry name" value="ATP_synt_epsi"/>
    <property type="match status" value="1"/>
</dbReference>
<dbReference type="NCBIfam" id="NF001851">
    <property type="entry name" value="PRK00571.2-4"/>
    <property type="match status" value="1"/>
</dbReference>
<dbReference type="PANTHER" id="PTHR13822">
    <property type="entry name" value="ATP SYNTHASE DELTA/EPSILON CHAIN"/>
    <property type="match status" value="1"/>
</dbReference>
<dbReference type="PANTHER" id="PTHR13822:SF10">
    <property type="entry name" value="ATP SYNTHASE EPSILON CHAIN, CHLOROPLASTIC"/>
    <property type="match status" value="1"/>
</dbReference>
<dbReference type="Pfam" id="PF02823">
    <property type="entry name" value="ATP-synt_DE_N"/>
    <property type="match status" value="1"/>
</dbReference>
<dbReference type="SUPFAM" id="SSF51344">
    <property type="entry name" value="Epsilon subunit of F1F0-ATP synthase N-terminal domain"/>
    <property type="match status" value="1"/>
</dbReference>
<reference key="1">
    <citation type="journal article" date="2008" name="PLoS ONE">
        <title>Genome sequence of Brucella abortus vaccine strain S19 compared to virulent strains yields candidate virulence genes.</title>
        <authorList>
            <person name="Crasta O.R."/>
            <person name="Folkerts O."/>
            <person name="Fei Z."/>
            <person name="Mane S.P."/>
            <person name="Evans C."/>
            <person name="Martino-Catt S."/>
            <person name="Bricker B."/>
            <person name="Yu G."/>
            <person name="Du L."/>
            <person name="Sobral B.W."/>
        </authorList>
    </citation>
    <scope>NUCLEOTIDE SEQUENCE [LARGE SCALE GENOMIC DNA]</scope>
    <source>
        <strain>S19</strain>
    </source>
</reference>
<protein>
    <recommendedName>
        <fullName evidence="1">ATP synthase epsilon chain</fullName>
    </recommendedName>
    <alternativeName>
        <fullName evidence="1">ATP synthase F1 sector epsilon subunit</fullName>
    </alternativeName>
    <alternativeName>
        <fullName evidence="1">F-ATPase epsilon subunit</fullName>
    </alternativeName>
</protein>
<keyword id="KW-0066">ATP synthesis</keyword>
<keyword id="KW-0997">Cell inner membrane</keyword>
<keyword id="KW-1003">Cell membrane</keyword>
<keyword id="KW-0139">CF(1)</keyword>
<keyword id="KW-0375">Hydrogen ion transport</keyword>
<keyword id="KW-0406">Ion transport</keyword>
<keyword id="KW-0472">Membrane</keyword>
<keyword id="KW-0813">Transport</keyword>
<feature type="chain" id="PRO_1000127829" description="ATP synthase epsilon chain">
    <location>
        <begin position="1"/>
        <end position="135"/>
    </location>
</feature>
<proteinExistence type="inferred from homology"/>
<sequence length="135" mass="14482">MAQAFQFELVSPERLLLSAQVTEVVIPGSEGYLTALAGHSPLMTTIMPGVVSVKLADGKTDSYVVFGGFADITPQGCTVLAESATHVDDIDPADIQHRIDHARKVLEDASSNEHRTKAEIFLHQLMTLQGAILPA</sequence>
<accession>B2S7M2</accession>